<sequence length="540" mass="60883">MVRFIFITGGVVSSLGKGLTAASLAMLLQAKGFKVCLRKLDPYLNVDPGTMNPHQHGEVYVTDDGAETDLDLGHYERFTGVPACKFDNITTGAVYSKLLKEERLGNYTGLTVQVIPHVTNIIKDFILSNTKGFDFVLCEIGGTVGDIEGLPFFEAIRQIGNELKSKQCLFIHLTLLPYVKTARELKTKPTQHSVKELRTIGISPNILVCRAERKIAKSEIEKIALFCNIDPEYVIPAIDQKNIYLVPLAYHDYGLDNKVLKFFNLTIAPSKLNRWHDIIERLKESHSKVRIAIIAKYHKLKDAYKSVIEALDHAGIYHKYKVDLVWINAENVTNENISKKLLGVDGILVPGGFGERATEGKILAVNYARTNNIPFFGICLGMQLAAIEIARNLVGLKDAVTEEFKTAGTKIIERISKHDEDFNPSDITIENIKKTMRLGSYTCNLVSDSITANAYGELKISERHRHRYKFNNDFQDIFEKNGVKFSGFSEDKKIVEAIELPKLLWFVGVQFHPEFKSKPFEAHPLFIRFVEAAIKYNKNN</sequence>
<evidence type="ECO:0000255" key="1">
    <source>
        <dbReference type="HAMAP-Rule" id="MF_01227"/>
    </source>
</evidence>
<organism>
    <name type="scientific">Rickettsia bellii (strain RML369-C)</name>
    <dbReference type="NCBI Taxonomy" id="336407"/>
    <lineage>
        <taxon>Bacteria</taxon>
        <taxon>Pseudomonadati</taxon>
        <taxon>Pseudomonadota</taxon>
        <taxon>Alphaproteobacteria</taxon>
        <taxon>Rickettsiales</taxon>
        <taxon>Rickettsiaceae</taxon>
        <taxon>Rickettsieae</taxon>
        <taxon>Rickettsia</taxon>
        <taxon>belli group</taxon>
    </lineage>
</organism>
<proteinExistence type="inferred from homology"/>
<accession>Q1RHU4</accession>
<keyword id="KW-0067">ATP-binding</keyword>
<keyword id="KW-0315">Glutamine amidotransferase</keyword>
<keyword id="KW-0436">Ligase</keyword>
<keyword id="KW-0460">Magnesium</keyword>
<keyword id="KW-0479">Metal-binding</keyword>
<keyword id="KW-0547">Nucleotide-binding</keyword>
<keyword id="KW-0665">Pyrimidine biosynthesis</keyword>
<dbReference type="EC" id="6.3.4.2" evidence="1"/>
<dbReference type="EMBL" id="CP000087">
    <property type="protein sequence ID" value="ABE05070.1"/>
    <property type="molecule type" value="Genomic_DNA"/>
</dbReference>
<dbReference type="RefSeq" id="WP_011477650.1">
    <property type="nucleotide sequence ID" value="NC_007940.1"/>
</dbReference>
<dbReference type="SMR" id="Q1RHU4"/>
<dbReference type="MEROPS" id="C26.964"/>
<dbReference type="KEGG" id="rbe:RBE_0989"/>
<dbReference type="eggNOG" id="COG0504">
    <property type="taxonomic scope" value="Bacteria"/>
</dbReference>
<dbReference type="HOGENOM" id="CLU_011675_5_0_5"/>
<dbReference type="OrthoDB" id="9801107at2"/>
<dbReference type="UniPathway" id="UPA00159">
    <property type="reaction ID" value="UER00277"/>
</dbReference>
<dbReference type="Proteomes" id="UP000001951">
    <property type="component" value="Chromosome"/>
</dbReference>
<dbReference type="GO" id="GO:0097268">
    <property type="term" value="C:cytoophidium"/>
    <property type="evidence" value="ECO:0007669"/>
    <property type="project" value="TreeGrafter"/>
</dbReference>
<dbReference type="GO" id="GO:0005737">
    <property type="term" value="C:cytoplasm"/>
    <property type="evidence" value="ECO:0007669"/>
    <property type="project" value="TreeGrafter"/>
</dbReference>
<dbReference type="GO" id="GO:0005524">
    <property type="term" value="F:ATP binding"/>
    <property type="evidence" value="ECO:0007669"/>
    <property type="project" value="UniProtKB-KW"/>
</dbReference>
<dbReference type="GO" id="GO:0003883">
    <property type="term" value="F:CTP synthase activity"/>
    <property type="evidence" value="ECO:0007669"/>
    <property type="project" value="UniProtKB-UniRule"/>
</dbReference>
<dbReference type="GO" id="GO:0004359">
    <property type="term" value="F:glutaminase activity"/>
    <property type="evidence" value="ECO:0007669"/>
    <property type="project" value="RHEA"/>
</dbReference>
<dbReference type="GO" id="GO:0042802">
    <property type="term" value="F:identical protein binding"/>
    <property type="evidence" value="ECO:0007669"/>
    <property type="project" value="TreeGrafter"/>
</dbReference>
<dbReference type="GO" id="GO:0046872">
    <property type="term" value="F:metal ion binding"/>
    <property type="evidence" value="ECO:0007669"/>
    <property type="project" value="UniProtKB-KW"/>
</dbReference>
<dbReference type="GO" id="GO:0044210">
    <property type="term" value="P:'de novo' CTP biosynthetic process"/>
    <property type="evidence" value="ECO:0007669"/>
    <property type="project" value="UniProtKB-UniRule"/>
</dbReference>
<dbReference type="GO" id="GO:0019856">
    <property type="term" value="P:pyrimidine nucleobase biosynthetic process"/>
    <property type="evidence" value="ECO:0007669"/>
    <property type="project" value="TreeGrafter"/>
</dbReference>
<dbReference type="CDD" id="cd03113">
    <property type="entry name" value="CTPS_N"/>
    <property type="match status" value="1"/>
</dbReference>
<dbReference type="CDD" id="cd01746">
    <property type="entry name" value="GATase1_CTP_Synthase"/>
    <property type="match status" value="1"/>
</dbReference>
<dbReference type="FunFam" id="3.40.50.300:FF:000009">
    <property type="entry name" value="CTP synthase"/>
    <property type="match status" value="1"/>
</dbReference>
<dbReference type="FunFam" id="3.40.50.880:FF:000002">
    <property type="entry name" value="CTP synthase"/>
    <property type="match status" value="1"/>
</dbReference>
<dbReference type="Gene3D" id="3.40.50.880">
    <property type="match status" value="1"/>
</dbReference>
<dbReference type="Gene3D" id="3.40.50.300">
    <property type="entry name" value="P-loop containing nucleotide triphosphate hydrolases"/>
    <property type="match status" value="1"/>
</dbReference>
<dbReference type="HAMAP" id="MF_01227">
    <property type="entry name" value="PyrG"/>
    <property type="match status" value="1"/>
</dbReference>
<dbReference type="InterPro" id="IPR029062">
    <property type="entry name" value="Class_I_gatase-like"/>
</dbReference>
<dbReference type="InterPro" id="IPR004468">
    <property type="entry name" value="CTP_synthase"/>
</dbReference>
<dbReference type="InterPro" id="IPR017456">
    <property type="entry name" value="CTP_synthase_N"/>
</dbReference>
<dbReference type="InterPro" id="IPR017926">
    <property type="entry name" value="GATASE"/>
</dbReference>
<dbReference type="InterPro" id="IPR033828">
    <property type="entry name" value="GATase1_CTP_Synthase"/>
</dbReference>
<dbReference type="InterPro" id="IPR027417">
    <property type="entry name" value="P-loop_NTPase"/>
</dbReference>
<dbReference type="NCBIfam" id="NF003792">
    <property type="entry name" value="PRK05380.1"/>
    <property type="match status" value="1"/>
</dbReference>
<dbReference type="NCBIfam" id="TIGR00337">
    <property type="entry name" value="PyrG"/>
    <property type="match status" value="1"/>
</dbReference>
<dbReference type="PANTHER" id="PTHR11550">
    <property type="entry name" value="CTP SYNTHASE"/>
    <property type="match status" value="1"/>
</dbReference>
<dbReference type="PANTHER" id="PTHR11550:SF0">
    <property type="entry name" value="CTP SYNTHASE-RELATED"/>
    <property type="match status" value="1"/>
</dbReference>
<dbReference type="Pfam" id="PF06418">
    <property type="entry name" value="CTP_synth_N"/>
    <property type="match status" value="1"/>
</dbReference>
<dbReference type="Pfam" id="PF00117">
    <property type="entry name" value="GATase"/>
    <property type="match status" value="1"/>
</dbReference>
<dbReference type="SUPFAM" id="SSF52317">
    <property type="entry name" value="Class I glutamine amidotransferase-like"/>
    <property type="match status" value="1"/>
</dbReference>
<dbReference type="SUPFAM" id="SSF52540">
    <property type="entry name" value="P-loop containing nucleoside triphosphate hydrolases"/>
    <property type="match status" value="1"/>
</dbReference>
<dbReference type="PROSITE" id="PS51273">
    <property type="entry name" value="GATASE_TYPE_1"/>
    <property type="match status" value="1"/>
</dbReference>
<reference key="1">
    <citation type="journal article" date="2006" name="PLoS Genet.">
        <title>Genome sequence of Rickettsia bellii illuminates the role of amoebae in gene exchanges between intracellular pathogens.</title>
        <authorList>
            <person name="Ogata H."/>
            <person name="La Scola B."/>
            <person name="Audic S."/>
            <person name="Renesto P."/>
            <person name="Blanc G."/>
            <person name="Robert C."/>
            <person name="Fournier P.-E."/>
            <person name="Claverie J.-M."/>
            <person name="Raoult D."/>
        </authorList>
    </citation>
    <scope>NUCLEOTIDE SEQUENCE [LARGE SCALE GENOMIC DNA]</scope>
    <source>
        <strain>RML369-C</strain>
    </source>
</reference>
<comment type="function">
    <text evidence="1">Catalyzes the ATP-dependent amination of UTP to CTP with either L-glutamine or ammonia as the source of nitrogen. Regulates intracellular CTP levels through interactions with the four ribonucleotide triphosphates.</text>
</comment>
<comment type="catalytic activity">
    <reaction evidence="1">
        <text>UTP + L-glutamine + ATP + H2O = CTP + L-glutamate + ADP + phosphate + 2 H(+)</text>
        <dbReference type="Rhea" id="RHEA:26426"/>
        <dbReference type="ChEBI" id="CHEBI:15377"/>
        <dbReference type="ChEBI" id="CHEBI:15378"/>
        <dbReference type="ChEBI" id="CHEBI:29985"/>
        <dbReference type="ChEBI" id="CHEBI:30616"/>
        <dbReference type="ChEBI" id="CHEBI:37563"/>
        <dbReference type="ChEBI" id="CHEBI:43474"/>
        <dbReference type="ChEBI" id="CHEBI:46398"/>
        <dbReference type="ChEBI" id="CHEBI:58359"/>
        <dbReference type="ChEBI" id="CHEBI:456216"/>
        <dbReference type="EC" id="6.3.4.2"/>
    </reaction>
</comment>
<comment type="catalytic activity">
    <reaction evidence="1">
        <text>L-glutamine + H2O = L-glutamate + NH4(+)</text>
        <dbReference type="Rhea" id="RHEA:15889"/>
        <dbReference type="ChEBI" id="CHEBI:15377"/>
        <dbReference type="ChEBI" id="CHEBI:28938"/>
        <dbReference type="ChEBI" id="CHEBI:29985"/>
        <dbReference type="ChEBI" id="CHEBI:58359"/>
    </reaction>
</comment>
<comment type="catalytic activity">
    <reaction evidence="1">
        <text>UTP + NH4(+) + ATP = CTP + ADP + phosphate + 2 H(+)</text>
        <dbReference type="Rhea" id="RHEA:16597"/>
        <dbReference type="ChEBI" id="CHEBI:15378"/>
        <dbReference type="ChEBI" id="CHEBI:28938"/>
        <dbReference type="ChEBI" id="CHEBI:30616"/>
        <dbReference type="ChEBI" id="CHEBI:37563"/>
        <dbReference type="ChEBI" id="CHEBI:43474"/>
        <dbReference type="ChEBI" id="CHEBI:46398"/>
        <dbReference type="ChEBI" id="CHEBI:456216"/>
    </reaction>
</comment>
<comment type="activity regulation">
    <text evidence="1">Allosterically activated by GTP, when glutamine is the substrate; GTP has no effect on the reaction when ammonia is the substrate. The allosteric effector GTP functions by stabilizing the protein conformation that binds the tetrahedral intermediate(s) formed during glutamine hydrolysis. Inhibited by the product CTP, via allosteric rather than competitive inhibition.</text>
</comment>
<comment type="pathway">
    <text evidence="1">Pyrimidine metabolism; CTP biosynthesis via de novo pathway; CTP from UDP: step 2/2.</text>
</comment>
<comment type="subunit">
    <text evidence="1">Homotetramer.</text>
</comment>
<comment type="miscellaneous">
    <text evidence="1">CTPSs have evolved a hybrid strategy for distinguishing between UTP and CTP. The overlapping regions of the product feedback inhibitory and substrate sites recognize a common feature in both compounds, the triphosphate moiety. To differentiate isosteric substrate and product pyrimidine rings, an additional pocket far from the expected kinase/ligase catalytic site, specifically recognizes the cytosine and ribose portions of the product inhibitor.</text>
</comment>
<comment type="similarity">
    <text evidence="1">Belongs to the CTP synthase family.</text>
</comment>
<name>PYRG_RICBR</name>
<gene>
    <name evidence="1" type="primary">pyrG</name>
    <name type="ordered locus">RBE_0989</name>
</gene>
<protein>
    <recommendedName>
        <fullName evidence="1">CTP synthase</fullName>
        <ecNumber evidence="1">6.3.4.2</ecNumber>
    </recommendedName>
    <alternativeName>
        <fullName evidence="1">Cytidine 5'-triphosphate synthase</fullName>
    </alternativeName>
    <alternativeName>
        <fullName evidence="1">Cytidine triphosphate synthetase</fullName>
        <shortName evidence="1">CTP synthetase</shortName>
        <shortName evidence="1">CTPS</shortName>
    </alternativeName>
    <alternativeName>
        <fullName evidence="1">UTP--ammonia ligase</fullName>
    </alternativeName>
</protein>
<feature type="chain" id="PRO_0000266203" description="CTP synthase">
    <location>
        <begin position="1"/>
        <end position="540"/>
    </location>
</feature>
<feature type="domain" description="Glutamine amidotransferase type-1" evidence="1">
    <location>
        <begin position="290"/>
        <end position="539"/>
    </location>
</feature>
<feature type="region of interest" description="Amidoligase domain" evidence="1">
    <location>
        <begin position="1"/>
        <end position="265"/>
    </location>
</feature>
<feature type="active site" description="Nucleophile; for glutamine hydrolysis" evidence="1">
    <location>
        <position position="379"/>
    </location>
</feature>
<feature type="active site" evidence="1">
    <location>
        <position position="512"/>
    </location>
</feature>
<feature type="active site" evidence="1">
    <location>
        <position position="514"/>
    </location>
</feature>
<feature type="binding site" evidence="1">
    <location>
        <position position="13"/>
    </location>
    <ligand>
        <name>CTP</name>
        <dbReference type="ChEBI" id="CHEBI:37563"/>
        <note>allosteric inhibitor</note>
    </ligand>
</feature>
<feature type="binding site" evidence="1">
    <location>
        <position position="13"/>
    </location>
    <ligand>
        <name>UTP</name>
        <dbReference type="ChEBI" id="CHEBI:46398"/>
    </ligand>
</feature>
<feature type="binding site" evidence="1">
    <location>
        <begin position="14"/>
        <end position="19"/>
    </location>
    <ligand>
        <name>ATP</name>
        <dbReference type="ChEBI" id="CHEBI:30616"/>
    </ligand>
</feature>
<feature type="binding site" evidence="1">
    <location>
        <position position="71"/>
    </location>
    <ligand>
        <name>ATP</name>
        <dbReference type="ChEBI" id="CHEBI:30616"/>
    </ligand>
</feature>
<feature type="binding site" evidence="1">
    <location>
        <position position="71"/>
    </location>
    <ligand>
        <name>Mg(2+)</name>
        <dbReference type="ChEBI" id="CHEBI:18420"/>
    </ligand>
</feature>
<feature type="binding site" evidence="1">
    <location>
        <position position="139"/>
    </location>
    <ligand>
        <name>Mg(2+)</name>
        <dbReference type="ChEBI" id="CHEBI:18420"/>
    </ligand>
</feature>
<feature type="binding site" evidence="1">
    <location>
        <begin position="146"/>
        <end position="148"/>
    </location>
    <ligand>
        <name>CTP</name>
        <dbReference type="ChEBI" id="CHEBI:37563"/>
        <note>allosteric inhibitor</note>
    </ligand>
</feature>
<feature type="binding site" evidence="1">
    <location>
        <begin position="186"/>
        <end position="191"/>
    </location>
    <ligand>
        <name>CTP</name>
        <dbReference type="ChEBI" id="CHEBI:37563"/>
        <note>allosteric inhibitor</note>
    </ligand>
</feature>
<feature type="binding site" evidence="1">
    <location>
        <begin position="186"/>
        <end position="191"/>
    </location>
    <ligand>
        <name>UTP</name>
        <dbReference type="ChEBI" id="CHEBI:46398"/>
    </ligand>
</feature>
<feature type="binding site" evidence="1">
    <location>
        <position position="222"/>
    </location>
    <ligand>
        <name>CTP</name>
        <dbReference type="ChEBI" id="CHEBI:37563"/>
        <note>allosteric inhibitor</note>
    </ligand>
</feature>
<feature type="binding site" evidence="1">
    <location>
        <position position="222"/>
    </location>
    <ligand>
        <name>UTP</name>
        <dbReference type="ChEBI" id="CHEBI:46398"/>
    </ligand>
</feature>
<feature type="binding site" evidence="1">
    <location>
        <position position="352"/>
    </location>
    <ligand>
        <name>L-glutamine</name>
        <dbReference type="ChEBI" id="CHEBI:58359"/>
    </ligand>
</feature>
<feature type="binding site" evidence="1">
    <location>
        <begin position="380"/>
        <end position="383"/>
    </location>
    <ligand>
        <name>L-glutamine</name>
        <dbReference type="ChEBI" id="CHEBI:58359"/>
    </ligand>
</feature>
<feature type="binding site" evidence="1">
    <location>
        <position position="403"/>
    </location>
    <ligand>
        <name>L-glutamine</name>
        <dbReference type="ChEBI" id="CHEBI:58359"/>
    </ligand>
</feature>
<feature type="binding site" evidence="1">
    <location>
        <position position="467"/>
    </location>
    <ligand>
        <name>L-glutamine</name>
        <dbReference type="ChEBI" id="CHEBI:58359"/>
    </ligand>
</feature>